<sequence length="131" mass="14116">MCGIYPYQLVTSSASPKTDVFVSSLPTSPPQALGAASVMALQLVFKNCTISLFISLNSNRKASWPSGDSIFSNCDFGMCSAKNSCSEYVNSPSDWIPMIRDGCWMVERTSVMSSTLSLAKSCVSSLRVMAM</sequence>
<protein>
    <recommendedName>
        <fullName>Putative uncharacterized protein YNL276C</fullName>
    </recommendedName>
</protein>
<proteinExistence type="uncertain"/>
<comment type="miscellaneous">
    <text evidence="1">Almost completely overlaps MET2.</text>
</comment>
<comment type="caution">
    <text evidence="2">Product of a dubious gene prediction unlikely to encode a functional protein. Because of that it is not part of the S.cerevisiae S288c complete/reference proteome set.</text>
</comment>
<accession>P53837</accession>
<name>YN16_YEAST</name>
<organism>
    <name type="scientific">Saccharomyces cerevisiae (strain ATCC 204508 / S288c)</name>
    <name type="common">Baker's yeast</name>
    <dbReference type="NCBI Taxonomy" id="559292"/>
    <lineage>
        <taxon>Eukaryota</taxon>
        <taxon>Fungi</taxon>
        <taxon>Dikarya</taxon>
        <taxon>Ascomycota</taxon>
        <taxon>Saccharomycotina</taxon>
        <taxon>Saccharomycetes</taxon>
        <taxon>Saccharomycetales</taxon>
        <taxon>Saccharomycetaceae</taxon>
        <taxon>Saccharomyces</taxon>
    </lineage>
</organism>
<feature type="chain" id="PRO_0000203379" description="Putative uncharacterized protein YNL276C">
    <location>
        <begin position="1"/>
        <end position="131"/>
    </location>
</feature>
<dbReference type="EMBL" id="Z71553">
    <property type="protein sequence ID" value="CAA96189.1"/>
    <property type="molecule type" value="Genomic_DNA"/>
</dbReference>
<dbReference type="PIR" id="S63250">
    <property type="entry name" value="S63250"/>
</dbReference>
<dbReference type="DIP" id="DIP-2554N"/>
<dbReference type="IntAct" id="P53837">
    <property type="interactions" value="2"/>
</dbReference>
<dbReference type="MINT" id="P53837"/>
<dbReference type="PaxDb" id="4932-YNL276C"/>
<dbReference type="EnsemblFungi" id="YNL276C_mRNA">
    <property type="protein sequence ID" value="YNL276C"/>
    <property type="gene ID" value="YNL276C"/>
</dbReference>
<dbReference type="AGR" id="SGD:S000005220"/>
<dbReference type="SGD" id="S000005220">
    <property type="gene designation" value="YNL276C"/>
</dbReference>
<dbReference type="HOGENOM" id="CLU_1929227_0_0_1"/>
<evidence type="ECO:0000305" key="1"/>
<evidence type="ECO:0000305" key="2">
    <source>
    </source>
</evidence>
<reference key="1">
    <citation type="journal article" date="1997" name="Nature">
        <title>The nucleotide sequence of Saccharomyces cerevisiae chromosome XIV and its evolutionary implications.</title>
        <authorList>
            <person name="Philippsen P."/>
            <person name="Kleine K."/>
            <person name="Poehlmann R."/>
            <person name="Duesterhoeft A."/>
            <person name="Hamberg K."/>
            <person name="Hegemann J.H."/>
            <person name="Obermaier B."/>
            <person name="Urrestarazu L.A."/>
            <person name="Aert R."/>
            <person name="Albermann K."/>
            <person name="Altmann R."/>
            <person name="Andre B."/>
            <person name="Baladron V."/>
            <person name="Ballesta J.P.G."/>
            <person name="Becam A.-M."/>
            <person name="Beinhauer J.D."/>
            <person name="Boskovic J."/>
            <person name="Buitrago M.J."/>
            <person name="Bussereau F."/>
            <person name="Coster F."/>
            <person name="Crouzet M."/>
            <person name="D'Angelo M."/>
            <person name="Dal Pero F."/>
            <person name="De Antoni A."/>
            <person name="del Rey F."/>
            <person name="Doignon F."/>
            <person name="Domdey H."/>
            <person name="Dubois E."/>
            <person name="Fiedler T.A."/>
            <person name="Fleig U."/>
            <person name="Floeth M."/>
            <person name="Fritz C."/>
            <person name="Gaillardin C."/>
            <person name="Garcia-Cantalejo J.M."/>
            <person name="Glansdorff N."/>
            <person name="Goffeau A."/>
            <person name="Gueldener U."/>
            <person name="Herbert C.J."/>
            <person name="Heumann K."/>
            <person name="Heuss-Neitzel D."/>
            <person name="Hilbert H."/>
            <person name="Hinni K."/>
            <person name="Iraqui Houssaini I."/>
            <person name="Jacquet M."/>
            <person name="Jimenez A."/>
            <person name="Jonniaux J.-L."/>
            <person name="Karpfinger-Hartl L."/>
            <person name="Lanfranchi G."/>
            <person name="Lepingle A."/>
            <person name="Levesque H."/>
            <person name="Lyck R."/>
            <person name="Maftahi M."/>
            <person name="Mallet L."/>
            <person name="Maurer C.T.C."/>
            <person name="Messenguy F."/>
            <person name="Mewes H.-W."/>
            <person name="Moestl D."/>
            <person name="Nasr F."/>
            <person name="Nicaud J.-M."/>
            <person name="Niedenthal R.K."/>
            <person name="Pandolfo D."/>
            <person name="Pierard A."/>
            <person name="Piravandi E."/>
            <person name="Planta R.J."/>
            <person name="Pohl T.M."/>
            <person name="Purnelle B."/>
            <person name="Rebischung C."/>
            <person name="Remacha M.A."/>
            <person name="Revuelta J.L."/>
            <person name="Rinke M."/>
            <person name="Saiz J.E."/>
            <person name="Sartorello F."/>
            <person name="Scherens B."/>
            <person name="Sen-Gupta M."/>
            <person name="Soler-Mira A."/>
            <person name="Urbanus J.H.M."/>
            <person name="Valle G."/>
            <person name="Van Dyck L."/>
            <person name="Verhasselt P."/>
            <person name="Vierendeels F."/>
            <person name="Vissers S."/>
            <person name="Voet M."/>
            <person name="Volckaert G."/>
            <person name="Wach A."/>
            <person name="Wambutt R."/>
            <person name="Wedler H."/>
            <person name="Zollner A."/>
            <person name="Hani J."/>
        </authorList>
    </citation>
    <scope>NUCLEOTIDE SEQUENCE [LARGE SCALE GENOMIC DNA]</scope>
    <source>
        <strain>ATCC 204508 / S288c</strain>
    </source>
</reference>
<reference key="2">
    <citation type="journal article" date="2014" name="G3 (Bethesda)">
        <title>The reference genome sequence of Saccharomyces cerevisiae: Then and now.</title>
        <authorList>
            <person name="Engel S.R."/>
            <person name="Dietrich F.S."/>
            <person name="Fisk D.G."/>
            <person name="Binkley G."/>
            <person name="Balakrishnan R."/>
            <person name="Costanzo M.C."/>
            <person name="Dwight S.S."/>
            <person name="Hitz B.C."/>
            <person name="Karra K."/>
            <person name="Nash R.S."/>
            <person name="Weng S."/>
            <person name="Wong E.D."/>
            <person name="Lloyd P."/>
            <person name="Skrzypek M.S."/>
            <person name="Miyasato S.R."/>
            <person name="Simison M."/>
            <person name="Cherry J.M."/>
        </authorList>
    </citation>
    <scope>GENOME REANNOTATION</scope>
    <source>
        <strain>ATCC 204508 / S288c</strain>
    </source>
</reference>
<gene>
    <name type="ordered locus">YNL276C</name>
    <name type="ORF">N0621</name>
</gene>